<comment type="function">
    <text evidence="2">A cytochrome P450 monooxygenase that catalyzes the side-chain hydroxylation and cleavage of cholesterol to pregnenolone, the precursor of most steroid hormones. Catalyzes three sequential oxidation reactions of cholesterol, namely the hydroxylation at C22 followed with the hydroxylation at C20 to yield 20R,22R-hydroxycholesterol that is further cleaved between C20 and C22 to yield the C21-steroid pregnenolone and 4-methylpentanal. Mechanistically, uses molecular oxygen inserting one oxygen atom into a substrate and reducing the second into a water molecule. Two electrons are provided by NADPH via a two-protein mitochondrial transfer system comprising flavoprotein FDXR (adrenodoxin/ferredoxin reductase) and nonheme iron-sulfur protein FDX1 or FDX2 (adrenodoxin/ferredoxin).</text>
</comment>
<comment type="catalytic activity">
    <reaction evidence="2">
        <text>6 reduced [adrenodoxin] + cholesterol + 3 O2 + 6 H(+) = 4-methylpentanal + pregnenolone + 6 oxidized [adrenodoxin] + 4 H2O</text>
        <dbReference type="Rhea" id="RHEA:35739"/>
        <dbReference type="Rhea" id="RHEA-COMP:9998"/>
        <dbReference type="Rhea" id="RHEA-COMP:9999"/>
        <dbReference type="ChEBI" id="CHEBI:15377"/>
        <dbReference type="ChEBI" id="CHEBI:15378"/>
        <dbReference type="ChEBI" id="CHEBI:15379"/>
        <dbReference type="ChEBI" id="CHEBI:16113"/>
        <dbReference type="ChEBI" id="CHEBI:16581"/>
        <dbReference type="ChEBI" id="CHEBI:17998"/>
        <dbReference type="ChEBI" id="CHEBI:33737"/>
        <dbReference type="ChEBI" id="CHEBI:33738"/>
        <dbReference type="EC" id="1.14.15.6"/>
    </reaction>
    <physiologicalReaction direction="left-to-right" evidence="2">
        <dbReference type="Rhea" id="RHEA:35740"/>
    </physiologicalReaction>
</comment>
<comment type="catalytic activity">
    <reaction evidence="2">
        <text>2 reduced [adrenodoxin] + cholesterol + O2 + 2 H(+) = (22R)-hydroxycholesterol + 2 oxidized [adrenodoxin] + H2O</text>
        <dbReference type="Rhea" id="RHEA:34335"/>
        <dbReference type="Rhea" id="RHEA-COMP:9998"/>
        <dbReference type="Rhea" id="RHEA-COMP:9999"/>
        <dbReference type="ChEBI" id="CHEBI:15377"/>
        <dbReference type="ChEBI" id="CHEBI:15378"/>
        <dbReference type="ChEBI" id="CHEBI:15379"/>
        <dbReference type="ChEBI" id="CHEBI:16113"/>
        <dbReference type="ChEBI" id="CHEBI:33737"/>
        <dbReference type="ChEBI" id="CHEBI:33738"/>
        <dbReference type="ChEBI" id="CHEBI:67237"/>
    </reaction>
    <physiologicalReaction direction="left-to-right" evidence="2">
        <dbReference type="Rhea" id="RHEA:34336"/>
    </physiologicalReaction>
</comment>
<comment type="catalytic activity">
    <reaction evidence="2">
        <text>(22R)-hydroxycholesterol + 2 reduced [adrenodoxin] + O2 + 2 H(+) = (20R,22R)-20,22-dihydroxycholesterol + 2 oxidized [adrenodoxin] + H2O</text>
        <dbReference type="Rhea" id="RHEA:34339"/>
        <dbReference type="Rhea" id="RHEA-COMP:9998"/>
        <dbReference type="Rhea" id="RHEA-COMP:9999"/>
        <dbReference type="ChEBI" id="CHEBI:1294"/>
        <dbReference type="ChEBI" id="CHEBI:15377"/>
        <dbReference type="ChEBI" id="CHEBI:15378"/>
        <dbReference type="ChEBI" id="CHEBI:15379"/>
        <dbReference type="ChEBI" id="CHEBI:33737"/>
        <dbReference type="ChEBI" id="CHEBI:33738"/>
        <dbReference type="ChEBI" id="CHEBI:67237"/>
    </reaction>
    <physiologicalReaction direction="left-to-right" evidence="2">
        <dbReference type="Rhea" id="RHEA:34340"/>
    </physiologicalReaction>
</comment>
<comment type="catalytic activity">
    <reaction evidence="2">
        <text>(20R,22R)-20,22-dihydroxycholesterol + 2 reduced [adrenodoxin] + O2 + 2 H(+) = 4-methylpentanal + pregnenolone + 2 oxidized [adrenodoxin] + 2 H2O</text>
        <dbReference type="Rhea" id="RHEA:34343"/>
        <dbReference type="Rhea" id="RHEA-COMP:9998"/>
        <dbReference type="Rhea" id="RHEA-COMP:9999"/>
        <dbReference type="ChEBI" id="CHEBI:1294"/>
        <dbReference type="ChEBI" id="CHEBI:15377"/>
        <dbReference type="ChEBI" id="CHEBI:15378"/>
        <dbReference type="ChEBI" id="CHEBI:15379"/>
        <dbReference type="ChEBI" id="CHEBI:16581"/>
        <dbReference type="ChEBI" id="CHEBI:17998"/>
        <dbReference type="ChEBI" id="CHEBI:33737"/>
        <dbReference type="ChEBI" id="CHEBI:33738"/>
    </reaction>
    <physiologicalReaction direction="left-to-right" evidence="2">
        <dbReference type="Rhea" id="RHEA:34344"/>
    </physiologicalReaction>
</comment>
<comment type="cofactor">
    <cofactor evidence="2">
        <name>heme</name>
        <dbReference type="ChEBI" id="CHEBI:30413"/>
    </cofactor>
</comment>
<comment type="pathway">
    <text evidence="2">Lipid metabolism; C21-steroid hormone metabolism.</text>
</comment>
<comment type="pathway">
    <text evidence="2">Steroid metabolism; cholesterol metabolism.</text>
</comment>
<comment type="subunit">
    <text evidence="2">Interacts with FDX1/adrenodoxin.</text>
</comment>
<comment type="subcellular location">
    <subcellularLocation>
        <location evidence="3">Mitochondrion inner membrane</location>
        <topology evidence="5">Peripheral membrane protein</topology>
    </subcellularLocation>
    <text evidence="3">Localizes to the matrix side of the mitochondrion inner membrane.</text>
</comment>
<comment type="similarity">
    <text evidence="5">Belongs to the cytochrome P450 family.</text>
</comment>
<evidence type="ECO:0000250" key="1">
    <source>
        <dbReference type="UniProtKB" id="P00189"/>
    </source>
</evidence>
<evidence type="ECO:0000250" key="2">
    <source>
        <dbReference type="UniProtKB" id="P05108"/>
    </source>
</evidence>
<evidence type="ECO:0000250" key="3">
    <source>
        <dbReference type="UniProtKB" id="P14137"/>
    </source>
</evidence>
<evidence type="ECO:0000256" key="4">
    <source>
        <dbReference type="SAM" id="MobiDB-lite"/>
    </source>
</evidence>
<evidence type="ECO:0000305" key="5"/>
<evidence type="ECO:0000312" key="6">
    <source>
        <dbReference type="MGI" id="MGI:88582"/>
    </source>
</evidence>
<reference key="1">
    <citation type="submission" date="1999-10" db="EMBL/GenBank/DDBJ databases">
        <authorList>
            <person name="Tanaka M."/>
            <person name="Hennebold J.H."/>
            <person name="Adashi E.Y."/>
        </authorList>
    </citation>
    <scope>NUCLEOTIDE SEQUENCE [MRNA]</scope>
    <source>
        <strain>C57BL/6J</strain>
    </source>
</reference>
<reference key="2">
    <citation type="journal article" date="2010" name="Cell">
        <title>A tissue-specific atlas of mouse protein phosphorylation and expression.</title>
        <authorList>
            <person name="Huttlin E.L."/>
            <person name="Jedrychowski M.P."/>
            <person name="Elias J.E."/>
            <person name="Goswami T."/>
            <person name="Rad R."/>
            <person name="Beausoleil S.A."/>
            <person name="Villen J."/>
            <person name="Haas W."/>
            <person name="Sowa M.E."/>
            <person name="Gygi S.P."/>
        </authorList>
    </citation>
    <scope>IDENTIFICATION BY MASS SPECTROMETRY [LARGE SCALE ANALYSIS]</scope>
    <source>
        <tissue>Testis</tissue>
    </source>
</reference>
<proteinExistence type="evidence at protein level"/>
<protein>
    <recommendedName>
        <fullName evidence="2">Cholesterol side-chain cleavage enzyme, mitochondrial</fullName>
        <ecNumber evidence="2">1.14.15.6</ecNumber>
    </recommendedName>
    <alternativeName>
        <fullName>CYPXIA1</fullName>
    </alternativeName>
    <alternativeName>
        <fullName>Cholesterol desmolase</fullName>
    </alternativeName>
    <alternativeName>
        <fullName>Cytochrome P450 11A1</fullName>
    </alternativeName>
    <alternativeName>
        <fullName>Cytochrome P450(scc)</fullName>
    </alternativeName>
</protein>
<name>CP11A_MOUSE</name>
<accession>Q9QZ82</accession>
<dbReference type="EC" id="1.14.15.6" evidence="2"/>
<dbReference type="EMBL" id="AF195119">
    <property type="protein sequence ID" value="AAF03897.1"/>
    <property type="molecule type" value="mRNA"/>
</dbReference>
<dbReference type="CCDS" id="CCDS40653.1"/>
<dbReference type="RefSeq" id="NP_062753.3">
    <property type="nucleotide sequence ID" value="NM_019779.4"/>
</dbReference>
<dbReference type="SMR" id="Q9QZ82"/>
<dbReference type="BioGRID" id="198997">
    <property type="interactions" value="2"/>
</dbReference>
<dbReference type="FunCoup" id="Q9QZ82">
    <property type="interactions" value="357"/>
</dbReference>
<dbReference type="STRING" id="10090.ENSMUSP00000034874"/>
<dbReference type="PhosphoSitePlus" id="Q9QZ82"/>
<dbReference type="SwissPalm" id="Q9QZ82"/>
<dbReference type="PaxDb" id="10090-ENSMUSP00000034874"/>
<dbReference type="ProteomicsDB" id="283805"/>
<dbReference type="Antibodypedia" id="3076">
    <property type="antibodies" value="417 antibodies from 32 providers"/>
</dbReference>
<dbReference type="Ensembl" id="ENSMUST00000034874.14">
    <property type="protein sequence ID" value="ENSMUSP00000034874.8"/>
    <property type="gene ID" value="ENSMUSG00000032323.14"/>
</dbReference>
<dbReference type="GeneID" id="13070"/>
<dbReference type="KEGG" id="mmu:13070"/>
<dbReference type="UCSC" id="uc009pwa.1">
    <property type="organism name" value="mouse"/>
</dbReference>
<dbReference type="AGR" id="MGI:88582"/>
<dbReference type="CTD" id="1583"/>
<dbReference type="MGI" id="MGI:88582">
    <property type="gene designation" value="Cyp11a1"/>
</dbReference>
<dbReference type="VEuPathDB" id="HostDB:ENSMUSG00000032323"/>
<dbReference type="eggNOG" id="KOG0159">
    <property type="taxonomic scope" value="Eukaryota"/>
</dbReference>
<dbReference type="GeneTree" id="ENSGT00940000158575"/>
<dbReference type="HOGENOM" id="CLU_001570_28_4_1"/>
<dbReference type="InParanoid" id="Q9QZ82"/>
<dbReference type="OMA" id="QVANYAM"/>
<dbReference type="OrthoDB" id="3945418at2759"/>
<dbReference type="PhylomeDB" id="Q9QZ82"/>
<dbReference type="TreeFam" id="TF105094"/>
<dbReference type="Reactome" id="R-MMU-196108">
    <property type="pathway name" value="Pregnenolone biosynthesis"/>
</dbReference>
<dbReference type="Reactome" id="R-MMU-211976">
    <property type="pathway name" value="Endogenous sterols"/>
</dbReference>
<dbReference type="UniPathway" id="UPA00229"/>
<dbReference type="UniPathway" id="UPA00296"/>
<dbReference type="BioGRID-ORCS" id="13070">
    <property type="hits" value="3 hits in 78 CRISPR screens"/>
</dbReference>
<dbReference type="PRO" id="PR:Q9QZ82"/>
<dbReference type="Proteomes" id="UP000000589">
    <property type="component" value="Chromosome 9"/>
</dbReference>
<dbReference type="RNAct" id="Q9QZ82">
    <property type="molecule type" value="protein"/>
</dbReference>
<dbReference type="Bgee" id="ENSMUSG00000032323">
    <property type="expression patterns" value="Expressed in adrenal gland and 64 other cell types or tissues"/>
</dbReference>
<dbReference type="ExpressionAtlas" id="Q9QZ82">
    <property type="expression patterns" value="baseline and differential"/>
</dbReference>
<dbReference type="GO" id="GO:0005743">
    <property type="term" value="C:mitochondrial inner membrane"/>
    <property type="evidence" value="ECO:0000250"/>
    <property type="project" value="UniProtKB"/>
</dbReference>
<dbReference type="GO" id="GO:0005739">
    <property type="term" value="C:mitochondrion"/>
    <property type="evidence" value="ECO:0000314"/>
    <property type="project" value="MGI"/>
</dbReference>
<dbReference type="GO" id="GO:0008386">
    <property type="term" value="F:cholesterol monooxygenase (side-chain-cleaving) activity"/>
    <property type="evidence" value="ECO:0000314"/>
    <property type="project" value="MGI"/>
</dbReference>
<dbReference type="GO" id="GO:0020037">
    <property type="term" value="F:heme binding"/>
    <property type="evidence" value="ECO:0000250"/>
    <property type="project" value="UniProtKB"/>
</dbReference>
<dbReference type="GO" id="GO:0005506">
    <property type="term" value="F:iron ion binding"/>
    <property type="evidence" value="ECO:0007669"/>
    <property type="project" value="InterPro"/>
</dbReference>
<dbReference type="GO" id="GO:0006700">
    <property type="term" value="P:C21-steroid hormone biosynthetic process"/>
    <property type="evidence" value="ECO:0000314"/>
    <property type="project" value="MGI"/>
</dbReference>
<dbReference type="GO" id="GO:0008203">
    <property type="term" value="P:cholesterol metabolic process"/>
    <property type="evidence" value="ECO:0000250"/>
    <property type="project" value="UniProtKB"/>
</dbReference>
<dbReference type="FunFam" id="1.10.630.10:FF:000015">
    <property type="entry name" value="Cholesterol side-chain cleavage enzyme, mitochondrial"/>
    <property type="match status" value="1"/>
</dbReference>
<dbReference type="Gene3D" id="1.10.630.10">
    <property type="entry name" value="Cytochrome P450"/>
    <property type="match status" value="1"/>
</dbReference>
<dbReference type="InterPro" id="IPR050479">
    <property type="entry name" value="CYP11_CYP27_families"/>
</dbReference>
<dbReference type="InterPro" id="IPR001128">
    <property type="entry name" value="Cyt_P450"/>
</dbReference>
<dbReference type="InterPro" id="IPR017972">
    <property type="entry name" value="Cyt_P450_CS"/>
</dbReference>
<dbReference type="InterPro" id="IPR002401">
    <property type="entry name" value="Cyt_P450_E_grp-I"/>
</dbReference>
<dbReference type="InterPro" id="IPR036396">
    <property type="entry name" value="Cyt_P450_sf"/>
</dbReference>
<dbReference type="PANTHER" id="PTHR24279:SF3">
    <property type="entry name" value="CHOLESTEROL SIDE-CHAIN CLEAVAGE ENZYME, MITOCHONDRIAL"/>
    <property type="match status" value="1"/>
</dbReference>
<dbReference type="PANTHER" id="PTHR24279">
    <property type="entry name" value="CYTOCHROME P450"/>
    <property type="match status" value="1"/>
</dbReference>
<dbReference type="Pfam" id="PF00067">
    <property type="entry name" value="p450"/>
    <property type="match status" value="1"/>
</dbReference>
<dbReference type="PRINTS" id="PR00463">
    <property type="entry name" value="EP450I"/>
</dbReference>
<dbReference type="PRINTS" id="PR00385">
    <property type="entry name" value="P450"/>
</dbReference>
<dbReference type="SUPFAM" id="SSF48264">
    <property type="entry name" value="Cytochrome P450"/>
    <property type="match status" value="1"/>
</dbReference>
<dbReference type="PROSITE" id="PS00086">
    <property type="entry name" value="CYTOCHROME_P450"/>
    <property type="match status" value="1"/>
</dbReference>
<gene>
    <name evidence="6" type="primary">Cyp11a1</name>
    <name type="synonym">Cyp11a</name>
</gene>
<keyword id="KW-0153">Cholesterol metabolism</keyword>
<keyword id="KW-0349">Heme</keyword>
<keyword id="KW-0408">Iron</keyword>
<keyword id="KW-0443">Lipid metabolism</keyword>
<keyword id="KW-0472">Membrane</keyword>
<keyword id="KW-0479">Metal-binding</keyword>
<keyword id="KW-0496">Mitochondrion</keyword>
<keyword id="KW-0999">Mitochondrion inner membrane</keyword>
<keyword id="KW-0503">Monooxygenase</keyword>
<keyword id="KW-0560">Oxidoreductase</keyword>
<keyword id="KW-1185">Reference proteome</keyword>
<keyword id="KW-0753">Steroid metabolism</keyword>
<keyword id="KW-0755">Steroidogenesis</keyword>
<keyword id="KW-1207">Sterol metabolism</keyword>
<keyword id="KW-0809">Transit peptide</keyword>
<organism>
    <name type="scientific">Mus musculus</name>
    <name type="common">Mouse</name>
    <dbReference type="NCBI Taxonomy" id="10090"/>
    <lineage>
        <taxon>Eukaryota</taxon>
        <taxon>Metazoa</taxon>
        <taxon>Chordata</taxon>
        <taxon>Craniata</taxon>
        <taxon>Vertebrata</taxon>
        <taxon>Euteleostomi</taxon>
        <taxon>Mammalia</taxon>
        <taxon>Eutheria</taxon>
        <taxon>Euarchontoglires</taxon>
        <taxon>Glires</taxon>
        <taxon>Rodentia</taxon>
        <taxon>Myomorpha</taxon>
        <taxon>Muroidea</taxon>
        <taxon>Muridae</taxon>
        <taxon>Murinae</taxon>
        <taxon>Mus</taxon>
        <taxon>Mus</taxon>
    </lineage>
</organism>
<feature type="transit peptide" description="Mitochondrion" evidence="1">
    <location>
        <begin position="1"/>
        <end position="36"/>
    </location>
</feature>
<feature type="chain" id="PRO_0000003587" description="Cholesterol side-chain cleavage enzyme, mitochondrial">
    <location>
        <begin position="37"/>
        <end position="526"/>
    </location>
</feature>
<feature type="region of interest" description="Disordered" evidence="4">
    <location>
        <begin position="30"/>
        <end position="49"/>
    </location>
</feature>
<feature type="compositionally biased region" description="Low complexity" evidence="4">
    <location>
        <begin position="30"/>
        <end position="41"/>
    </location>
</feature>
<feature type="binding site" description="axial binding residue" evidence="2">
    <location>
        <position position="458"/>
    </location>
    <ligand>
        <name>heme</name>
        <dbReference type="ChEBI" id="CHEBI:30413"/>
    </ligand>
    <ligandPart>
        <name>Fe</name>
        <dbReference type="ChEBI" id="CHEBI:18248"/>
    </ligandPart>
</feature>
<sequence>MLAKGLSLRSVLVKGCQPFLSPTWQGPVLSTGKGAGTSTSSPRSFNEIPSPGDNGWLNLYHFWRESGTQKIHYHQMQSFQKYGPIYREKLGTLESVYIVDPKDASILFSCEGPNPERFLVPPWVAYHQYYQRPIGVLFKSSDAWKKDRIVLNQEVMAPGAIKNFVPLLEGVAQDFIKVLHRRIKQQNSGNFSGVISDDLFRFSFESISSVIFGERMGMLEEIVDPEAQRFINAVYQMFHTSVPMLNLPPDFFRLLRTKTWKDHAAAWDVIFNKADEYTQNFYWDLRQKRDFSQYPGVLYSLLGGNKLPFKNIQANITEMLAGGVDTTSMTLQWNLYEMAHNLKVQEMLRAEVLAARRQAQGDMAKMVQLVPLLKASIKETLRLHPISVTLQRYTVNDLVLRNYKIPAKTLVQVASFAMGRDPGFFPNPNKFDPTRWLEKSQNTTHFRYLGFGWGVRQCLGRRIAELEMTILLINLLENFRIEVQNLRDVGTKFSLILMPENPILFNFQPLKQDLGPAVTRKDNTVN</sequence>